<dbReference type="EC" id="3.2.2.6" evidence="1"/>
<dbReference type="EMBL" id="AB019224">
    <property type="protein sequence ID" value="BAB09490.1"/>
    <property type="molecule type" value="Genomic_DNA"/>
</dbReference>
<dbReference type="EMBL" id="CP002688">
    <property type="protein sequence ID" value="AED95197.1"/>
    <property type="molecule type" value="Genomic_DNA"/>
</dbReference>
<dbReference type="EMBL" id="BT010864">
    <property type="protein sequence ID" value="AAR24231.1"/>
    <property type="molecule type" value="mRNA"/>
</dbReference>
<dbReference type="EMBL" id="BT012618">
    <property type="protein sequence ID" value="AAT06437.1"/>
    <property type="molecule type" value="mRNA"/>
</dbReference>
<dbReference type="RefSeq" id="NP_199320.1">
    <property type="nucleotide sequence ID" value="NM_123875.3"/>
</dbReference>
<dbReference type="SMR" id="Q9FHE9"/>
<dbReference type="FunCoup" id="Q9FHE9">
    <property type="interactions" value="2"/>
</dbReference>
<dbReference type="STRING" id="3702.Q9FHE9"/>
<dbReference type="GlyGen" id="Q9FHE9">
    <property type="glycosylation" value="1 site"/>
</dbReference>
<dbReference type="iPTMnet" id="Q9FHE9"/>
<dbReference type="PaxDb" id="3702-AT5G45070.1"/>
<dbReference type="ProteomicsDB" id="248688"/>
<dbReference type="EnsemblPlants" id="AT5G45070.1">
    <property type="protein sequence ID" value="AT5G45070.1"/>
    <property type="gene ID" value="AT5G45070"/>
</dbReference>
<dbReference type="GeneID" id="834538"/>
<dbReference type="Gramene" id="AT5G45070.1">
    <property type="protein sequence ID" value="AT5G45070.1"/>
    <property type="gene ID" value="AT5G45070"/>
</dbReference>
<dbReference type="KEGG" id="ath:AT5G45070"/>
<dbReference type="Araport" id="AT5G45070"/>
<dbReference type="TAIR" id="AT5G45070">
    <property type="gene designation" value="PP2-A8"/>
</dbReference>
<dbReference type="eggNOG" id="KOG0017">
    <property type="taxonomic scope" value="Eukaryota"/>
</dbReference>
<dbReference type="HOGENOM" id="CLU_786077_0_0_1"/>
<dbReference type="InParanoid" id="Q9FHE9"/>
<dbReference type="OMA" id="NEREFMN"/>
<dbReference type="PhylomeDB" id="Q9FHE9"/>
<dbReference type="PRO" id="PR:Q9FHE9"/>
<dbReference type="Proteomes" id="UP000006548">
    <property type="component" value="Chromosome 5"/>
</dbReference>
<dbReference type="GO" id="GO:0030246">
    <property type="term" value="F:carbohydrate binding"/>
    <property type="evidence" value="ECO:0000250"/>
    <property type="project" value="TAIR"/>
</dbReference>
<dbReference type="GO" id="GO:0061809">
    <property type="term" value="F:NAD+ nucleosidase activity, cyclic ADP-ribose generating"/>
    <property type="evidence" value="ECO:0007669"/>
    <property type="project" value="UniProtKB-EC"/>
</dbReference>
<dbReference type="GO" id="GO:0007165">
    <property type="term" value="P:signal transduction"/>
    <property type="evidence" value="ECO:0007669"/>
    <property type="project" value="InterPro"/>
</dbReference>
<dbReference type="FunFam" id="3.40.50.10140:FF:000007">
    <property type="entry name" value="Disease resistance protein (TIR-NBS-LRR class)"/>
    <property type="match status" value="1"/>
</dbReference>
<dbReference type="Gene3D" id="3.40.50.10140">
    <property type="entry name" value="Toll/interleukin-1 receptor homology (TIR) domain"/>
    <property type="match status" value="1"/>
</dbReference>
<dbReference type="InterPro" id="IPR025886">
    <property type="entry name" value="PP2-like"/>
</dbReference>
<dbReference type="InterPro" id="IPR000157">
    <property type="entry name" value="TIR_dom"/>
</dbReference>
<dbReference type="InterPro" id="IPR035897">
    <property type="entry name" value="Toll_tir_struct_dom_sf"/>
</dbReference>
<dbReference type="PANTHER" id="PTHR32009:SF75">
    <property type="entry name" value="PROTEIN PHLOEM PROTEIN 2-LIKE A5-RELATED"/>
    <property type="match status" value="1"/>
</dbReference>
<dbReference type="PANTHER" id="PTHR32009">
    <property type="entry name" value="TMV RESISTANCE PROTEIN N-LIKE"/>
    <property type="match status" value="1"/>
</dbReference>
<dbReference type="Pfam" id="PF14299">
    <property type="entry name" value="PP2"/>
    <property type="match status" value="1"/>
</dbReference>
<dbReference type="Pfam" id="PF01582">
    <property type="entry name" value="TIR"/>
    <property type="match status" value="1"/>
</dbReference>
<dbReference type="SMART" id="SM00255">
    <property type="entry name" value="TIR"/>
    <property type="match status" value="1"/>
</dbReference>
<dbReference type="SUPFAM" id="SSF52200">
    <property type="entry name" value="Toll/Interleukin receptor TIR domain"/>
    <property type="match status" value="1"/>
</dbReference>
<dbReference type="PROSITE" id="PS50104">
    <property type="entry name" value="TIR"/>
    <property type="match status" value="1"/>
</dbReference>
<name>P2A08_ARATH</name>
<gene>
    <name type="primary">PP2A8</name>
    <name type="ordered locus">At5g45070</name>
    <name type="ORF">K17O22.3</name>
</gene>
<sequence>MAASSSVRPTPTGPQVFINFRGKDLRNGFLSFLEPAMREANINVFIDKDEVVGTDLVNLFVRIQESRVAVVIFSKDYTSSEWCLDELAEIKDCINQGGLNAIPIFYKLAPSSVLELKGGFGDTFRVLKEKYKNDPERTQKWQEALESIPKLKGLRLAEKSDRNEREFMNEMILEIQKALWQIAMKGNPKVESNSKGGFLVPARRLTIAHSDNPEKWTWSAIYDRPHKADIEIATMINTHALIKISGDFHTRKLIPGKKYEVVFIVSLDDTSLGWKNEVTLTLKVVMSDEAANVKAKKLCLDEYIGENWVDIPVGDFEAPQEKEDAKIFFSMYQLLNTERKSGLVVKGFAIRPAQ</sequence>
<feature type="chain" id="PRO_0000285283" description="Protein PHLOEM PROTEIN 2-LIKE A8">
    <location>
        <begin position="1"/>
        <end position="354"/>
    </location>
</feature>
<feature type="domain" description="TIR" evidence="1">
    <location>
        <begin position="12"/>
        <end position="179"/>
    </location>
</feature>
<feature type="active site" evidence="1">
    <location>
        <position position="86"/>
    </location>
</feature>
<proteinExistence type="evidence at transcript level"/>
<organism>
    <name type="scientific">Arabidopsis thaliana</name>
    <name type="common">Mouse-ear cress</name>
    <dbReference type="NCBI Taxonomy" id="3702"/>
    <lineage>
        <taxon>Eukaryota</taxon>
        <taxon>Viridiplantae</taxon>
        <taxon>Streptophyta</taxon>
        <taxon>Embryophyta</taxon>
        <taxon>Tracheophyta</taxon>
        <taxon>Spermatophyta</taxon>
        <taxon>Magnoliopsida</taxon>
        <taxon>eudicotyledons</taxon>
        <taxon>Gunneridae</taxon>
        <taxon>Pentapetalae</taxon>
        <taxon>rosids</taxon>
        <taxon>malvids</taxon>
        <taxon>Brassicales</taxon>
        <taxon>Brassicaceae</taxon>
        <taxon>Camelineae</taxon>
        <taxon>Arabidopsis</taxon>
    </lineage>
</organism>
<protein>
    <recommendedName>
        <fullName>Protein PHLOEM PROTEIN 2-LIKE A8</fullName>
        <shortName>AtPP2-A8</shortName>
        <ecNumber evidence="1">3.2.2.6</ecNumber>
    </recommendedName>
</protein>
<evidence type="ECO:0000255" key="1">
    <source>
        <dbReference type="PROSITE-ProRule" id="PRU00204"/>
    </source>
</evidence>
<accession>Q9FHE9</accession>
<reference key="1">
    <citation type="journal article" date="2000" name="DNA Res.">
        <title>Structural analysis of Arabidopsis thaliana chromosome 5. X. Sequence features of the regions of 3,076,755 bp covered by sixty P1 and TAC clones.</title>
        <authorList>
            <person name="Sato S."/>
            <person name="Nakamura Y."/>
            <person name="Kaneko T."/>
            <person name="Katoh T."/>
            <person name="Asamizu E."/>
            <person name="Kotani H."/>
            <person name="Tabata S."/>
        </authorList>
    </citation>
    <scope>NUCLEOTIDE SEQUENCE [LARGE SCALE GENOMIC DNA]</scope>
    <source>
        <strain>cv. Columbia</strain>
    </source>
</reference>
<reference key="2">
    <citation type="journal article" date="2017" name="Plant J.">
        <title>Araport11: a complete reannotation of the Arabidopsis thaliana reference genome.</title>
        <authorList>
            <person name="Cheng C.Y."/>
            <person name="Krishnakumar V."/>
            <person name="Chan A.P."/>
            <person name="Thibaud-Nissen F."/>
            <person name="Schobel S."/>
            <person name="Town C.D."/>
        </authorList>
    </citation>
    <scope>GENOME REANNOTATION</scope>
    <source>
        <strain>cv. Columbia</strain>
    </source>
</reference>
<reference key="3">
    <citation type="submission" date="2004-05" db="EMBL/GenBank/DDBJ databases">
        <title>Arabidopsis cDNA clones.</title>
        <authorList>
            <person name="Cheuk R.F."/>
            <person name="Chen H."/>
            <person name="Kim C.J."/>
            <person name="Shinn P."/>
            <person name="Ecker J.R."/>
        </authorList>
    </citation>
    <scope>NUCLEOTIDE SEQUENCE [LARGE SCALE MRNA]</scope>
    <source>
        <strain>cv. Columbia</strain>
    </source>
</reference>
<reference key="4">
    <citation type="journal article" date="2003" name="Plant Physiol.">
        <title>Diversity of the superfamily of phloem lectins (phloem protein 2) in angiosperms.</title>
        <authorList>
            <person name="Dinant S."/>
            <person name="Clark A.M."/>
            <person name="Zhu Y."/>
            <person name="Vilaine F."/>
            <person name="Palauqui J.-C."/>
            <person name="Kusiak C."/>
            <person name="Thompson G.A."/>
        </authorList>
    </citation>
    <scope>GENE FAMILY</scope>
    <scope>NOMENCLATURE</scope>
</reference>
<comment type="catalytic activity">
    <reaction evidence="1">
        <text>NAD(+) + H2O = ADP-D-ribose + nicotinamide + H(+)</text>
        <dbReference type="Rhea" id="RHEA:16301"/>
        <dbReference type="ChEBI" id="CHEBI:15377"/>
        <dbReference type="ChEBI" id="CHEBI:15378"/>
        <dbReference type="ChEBI" id="CHEBI:17154"/>
        <dbReference type="ChEBI" id="CHEBI:57540"/>
        <dbReference type="ChEBI" id="CHEBI:57967"/>
        <dbReference type="EC" id="3.2.2.6"/>
    </reaction>
    <physiologicalReaction direction="left-to-right" evidence="1">
        <dbReference type="Rhea" id="RHEA:16302"/>
    </physiologicalReaction>
</comment>
<comment type="domain">
    <text evidence="1">The TIR domain mediates NAD(+) hydrolase (NADase) activity. Self-association of TIR domains is required for NADase activity.</text>
</comment>
<keyword id="KW-0378">Hydrolase</keyword>
<keyword id="KW-0520">NAD</keyword>
<keyword id="KW-1185">Reference proteome</keyword>